<protein>
    <recommendedName>
        <fullName evidence="1">Maturase K</fullName>
    </recommendedName>
    <alternativeName>
        <fullName evidence="1">Intron maturase</fullName>
    </alternativeName>
</protein>
<reference key="1">
    <citation type="journal article" date="2008" name="Nucleic Acids Res.">
        <title>The complete nucleotide sequences of the five genetically distinct plastid genomes of Oenothera, subsection Oenothera: I. Sequence evaluation and plastome evolution.</title>
        <authorList>
            <person name="Greiner S."/>
            <person name="Wang X."/>
            <person name="Rauwolf U."/>
            <person name="Silber M.V."/>
            <person name="Mayer K."/>
            <person name="Meurer J."/>
            <person name="Haberer G."/>
            <person name="Herrmann R.G."/>
        </authorList>
    </citation>
    <scope>NUCLEOTIDE SEQUENCE [LARGE SCALE GENOMIC DNA]</scope>
    <source>
        <strain>cv. Douthat 1</strain>
    </source>
</reference>
<sequence>MEEFPGYFELDRSRQHDFLYPLIFRESIYALAHDHGLNRNRSTLFENEVDYDKKYSLIIVKRLITRMYQRNHLIISANGSVQNPFWGHNKNLYSKILSEGFAVIVEIPFSLRVLSSFERKEKDIAKSPTLRSIHSIFPFLEDQFSHLDYLSHVLIPYPIHLEIAVQTLRYWVKDASSLHLLRIFLHEYWNSFSTPKKHITLFLKGNSRFFLFLYNSYVCEYESIFLFIRNQSSHFQSTSSGVFFERILFYVKIDHLVEVFVGTDFLDIRSFFKDPNMHYVRYQGKSILASKDTPLLMNKWKYYLVNLWQYHFSVWSQPGRININQLGKYSLDFLGYFSNVQLKSSVVRNQTLENSFLINNAMKKLETTVPILPLIGSLSRAKFCNALGHPISKPTRTDSSDSDIIDRFVRICRNLSHYHSGSSKKKSLYRIKYILRLSCVKTLARKHKSSVRAFLKRLGSELGDEFLTEEGVVLAVIFPKASGRLYRGRIWYLDIPCINDWVGDAEGSIFTK</sequence>
<accession>B0Z4K7</accession>
<keyword id="KW-0150">Chloroplast</keyword>
<keyword id="KW-0507">mRNA processing</keyword>
<keyword id="KW-0934">Plastid</keyword>
<keyword id="KW-0694">RNA-binding</keyword>
<keyword id="KW-0819">tRNA processing</keyword>
<feature type="chain" id="PRO_0000355951" description="Maturase K">
    <location>
        <begin position="1"/>
        <end position="512"/>
    </location>
</feature>
<proteinExistence type="inferred from homology"/>
<evidence type="ECO:0000255" key="1">
    <source>
        <dbReference type="HAMAP-Rule" id="MF_01390"/>
    </source>
</evidence>
<comment type="function">
    <text evidence="1">Usually encoded in the trnK tRNA gene intron. Probably assists in splicing its own and other chloroplast group II introns.</text>
</comment>
<comment type="subcellular location">
    <subcellularLocation>
        <location>Plastid</location>
        <location>Chloroplast</location>
    </subcellularLocation>
</comment>
<comment type="similarity">
    <text evidence="1">Belongs to the intron maturase 2 family. MatK subfamily.</text>
</comment>
<dbReference type="EMBL" id="EU262887">
    <property type="protein sequence ID" value="ABW98685.1"/>
    <property type="molecule type" value="Genomic_DNA"/>
</dbReference>
<dbReference type="RefSeq" id="YP_001687118.1">
    <property type="nucleotide sequence ID" value="NC_010358.2"/>
</dbReference>
<dbReference type="GeneID" id="5951845"/>
<dbReference type="GO" id="GO:0009507">
    <property type="term" value="C:chloroplast"/>
    <property type="evidence" value="ECO:0007669"/>
    <property type="project" value="UniProtKB-SubCell"/>
</dbReference>
<dbReference type="GO" id="GO:0003723">
    <property type="term" value="F:RNA binding"/>
    <property type="evidence" value="ECO:0007669"/>
    <property type="project" value="UniProtKB-KW"/>
</dbReference>
<dbReference type="GO" id="GO:0006397">
    <property type="term" value="P:mRNA processing"/>
    <property type="evidence" value="ECO:0007669"/>
    <property type="project" value="UniProtKB-KW"/>
</dbReference>
<dbReference type="GO" id="GO:0008380">
    <property type="term" value="P:RNA splicing"/>
    <property type="evidence" value="ECO:0007669"/>
    <property type="project" value="UniProtKB-UniRule"/>
</dbReference>
<dbReference type="GO" id="GO:0008033">
    <property type="term" value="P:tRNA processing"/>
    <property type="evidence" value="ECO:0007669"/>
    <property type="project" value="UniProtKB-KW"/>
</dbReference>
<dbReference type="HAMAP" id="MF_01390">
    <property type="entry name" value="MatK"/>
    <property type="match status" value="1"/>
</dbReference>
<dbReference type="InterPro" id="IPR024937">
    <property type="entry name" value="Domain_X"/>
</dbReference>
<dbReference type="InterPro" id="IPR002866">
    <property type="entry name" value="Maturase_MatK"/>
</dbReference>
<dbReference type="InterPro" id="IPR024942">
    <property type="entry name" value="Maturase_MatK_N"/>
</dbReference>
<dbReference type="PANTHER" id="PTHR34811">
    <property type="entry name" value="MATURASE K"/>
    <property type="match status" value="1"/>
</dbReference>
<dbReference type="PANTHER" id="PTHR34811:SF1">
    <property type="entry name" value="MATURASE K"/>
    <property type="match status" value="1"/>
</dbReference>
<dbReference type="Pfam" id="PF01348">
    <property type="entry name" value="Intron_maturas2"/>
    <property type="match status" value="1"/>
</dbReference>
<dbReference type="Pfam" id="PF01824">
    <property type="entry name" value="MatK_N"/>
    <property type="match status" value="1"/>
</dbReference>
<organism>
    <name type="scientific">Oenothera argillicola</name>
    <name type="common">Appalachian evening primrose</name>
    <dbReference type="NCBI Taxonomy" id="3940"/>
    <lineage>
        <taxon>Eukaryota</taxon>
        <taxon>Viridiplantae</taxon>
        <taxon>Streptophyta</taxon>
        <taxon>Embryophyta</taxon>
        <taxon>Tracheophyta</taxon>
        <taxon>Spermatophyta</taxon>
        <taxon>Magnoliopsida</taxon>
        <taxon>eudicotyledons</taxon>
        <taxon>Gunneridae</taxon>
        <taxon>Pentapetalae</taxon>
        <taxon>rosids</taxon>
        <taxon>malvids</taxon>
        <taxon>Myrtales</taxon>
        <taxon>Onagraceae</taxon>
        <taxon>Onagroideae</taxon>
        <taxon>Onagreae</taxon>
        <taxon>Oenothera</taxon>
    </lineage>
</organism>
<geneLocation type="chloroplast"/>
<name>MATK_OENAR</name>
<gene>
    <name evidence="1" type="primary">matK</name>
</gene>